<organism>
    <name type="scientific">Solanum lycopersicum</name>
    <name type="common">Tomato</name>
    <name type="synonym">Lycopersicon esculentum</name>
    <dbReference type="NCBI Taxonomy" id="4081"/>
    <lineage>
        <taxon>Eukaryota</taxon>
        <taxon>Viridiplantae</taxon>
        <taxon>Streptophyta</taxon>
        <taxon>Embryophyta</taxon>
        <taxon>Tracheophyta</taxon>
        <taxon>Spermatophyta</taxon>
        <taxon>Magnoliopsida</taxon>
        <taxon>eudicotyledons</taxon>
        <taxon>Gunneridae</taxon>
        <taxon>Pentapetalae</taxon>
        <taxon>asterids</taxon>
        <taxon>lamiids</taxon>
        <taxon>Solanales</taxon>
        <taxon>Solanaceae</taxon>
        <taxon>Solanoideae</taxon>
        <taxon>Solaneae</taxon>
        <taxon>Solanum</taxon>
        <taxon>Solanum subgen. Lycopersicon</taxon>
    </lineage>
</organism>
<reference key="1">
    <citation type="submission" date="1994-01" db="EMBL/GenBank/DDBJ databases">
        <title>Isolation of a cDNA clone for tomato fruit NADP+ malic enzyme.</title>
        <authorList>
            <person name="Finger F.L."/>
            <person name="Knee M."/>
            <person name="Lagrimini L.M.A."/>
        </authorList>
    </citation>
    <scope>NUCLEOTIDE SEQUENCE [MRNA]</scope>
    <source>
        <strain>cv. Rutgers</strain>
    </source>
</reference>
<protein>
    <recommendedName>
        <fullName>NADP-dependent malic enzyme, chloroplastic</fullName>
        <shortName>NADP-ME</shortName>
        <ecNumber>1.1.1.40</ecNumber>
    </recommendedName>
</protein>
<accession>P37222</accession>
<name>MAOC_SOLLC</name>
<proteinExistence type="evidence at transcript level"/>
<evidence type="ECO:0000250" key="1"/>
<evidence type="ECO:0000305" key="2"/>
<comment type="function">
    <text>The chloroplastic ME isoform decarboxylates malate shuttled from neighboring mesophyll cells. The CO(2) released is then refixed by ribulose-bisphosphate carboxylase. This pathway eliminates the photorespiratory loss of CO(2) that occurs in most plants.</text>
</comment>
<comment type="catalytic activity">
    <reaction>
        <text>(S)-malate + NADP(+) = pyruvate + CO2 + NADPH</text>
        <dbReference type="Rhea" id="RHEA:18253"/>
        <dbReference type="ChEBI" id="CHEBI:15361"/>
        <dbReference type="ChEBI" id="CHEBI:15589"/>
        <dbReference type="ChEBI" id="CHEBI:16526"/>
        <dbReference type="ChEBI" id="CHEBI:57783"/>
        <dbReference type="ChEBI" id="CHEBI:58349"/>
        <dbReference type="EC" id="1.1.1.40"/>
    </reaction>
</comment>
<comment type="catalytic activity">
    <reaction>
        <text>oxaloacetate + H(+) = pyruvate + CO2</text>
        <dbReference type="Rhea" id="RHEA:15641"/>
        <dbReference type="ChEBI" id="CHEBI:15361"/>
        <dbReference type="ChEBI" id="CHEBI:15378"/>
        <dbReference type="ChEBI" id="CHEBI:16452"/>
        <dbReference type="ChEBI" id="CHEBI:16526"/>
        <dbReference type="EC" id="1.1.1.40"/>
    </reaction>
</comment>
<comment type="cofactor">
    <cofactor evidence="1">
        <name>Mg(2+)</name>
        <dbReference type="ChEBI" id="CHEBI:18420"/>
    </cofactor>
    <cofactor evidence="1">
        <name>Mn(2+)</name>
        <dbReference type="ChEBI" id="CHEBI:29035"/>
    </cofactor>
    <text evidence="1">Divalent metal cations. Prefers magnesium or manganese.</text>
</comment>
<comment type="pathway">
    <text>Photosynthesis; C4 acid pathway.</text>
</comment>
<comment type="subunit">
    <text evidence="1">Homotetramer.</text>
</comment>
<comment type="subcellular location">
    <subcellularLocation>
        <location>Plastid</location>
        <location>Chloroplast</location>
    </subcellularLocation>
</comment>
<comment type="similarity">
    <text evidence="2">Belongs to the malic enzymes family.</text>
</comment>
<sequence length="573" mass="63561">IRHESTVTGGVQDVYGEDSATEDQSITPWTLSVASGFSLLRNPHYNKGLAFSERERDTHYLRGLLPPVVISHDLQVKKMMNSIRKYDVPLQRYMAMMDLQEMNERLFYKLLIDNVEELLPIVYTPTVGEACQKYGWIFKRPQGLFFSLKEKGKIHEVLKNWPEKKIQVIVVTDGERILGLGDLGCQGMGIPVGKLSLYSALGGIRPSACLPVTIDVGQTMKFVDDEFYIGLRQRRATGQEYSELLDEFMYAVKQNYGEKVLIQFEDFANHNAFNLLAKYGTSHLVFNDDIQGTASVVLAGLMAALNLVGGSLSEHTFLFLGAGEAGTGIAELIALEMSKQTGIPLEETRKKIWMVDSKGLIVKSRMEMLQHFKRPWAHDHEPVQELVNAVKSIKPTVLIGSSGAGRTFTKEVVQAMATFNEKPIIFALSNPTSQSECTAEEAYSWSEGRAIFASGSPFAPVEYNGKVYASGQANNAYIFPGFGLGLIISGAIRVHDDMLLVASEALADEVSQENFEKGTHIPPFSNIRKISAHIAKVAAKAYELGLATRLPQPKDLVAYAESCMYSPAYRSYR</sequence>
<dbReference type="EC" id="1.1.1.40"/>
<dbReference type="EMBL" id="L27509">
    <property type="protein sequence ID" value="AAA34174.1"/>
    <property type="molecule type" value="mRNA"/>
</dbReference>
<dbReference type="PIR" id="T07088">
    <property type="entry name" value="T07088"/>
</dbReference>
<dbReference type="SMR" id="P37222"/>
<dbReference type="FunCoup" id="P37222">
    <property type="interactions" value="3290"/>
</dbReference>
<dbReference type="STRING" id="4081.P37222"/>
<dbReference type="PaxDb" id="4081-Solyc12g044600.2.1"/>
<dbReference type="eggNOG" id="KOG1257">
    <property type="taxonomic scope" value="Eukaryota"/>
</dbReference>
<dbReference type="InParanoid" id="P37222"/>
<dbReference type="UniPathway" id="UPA00322"/>
<dbReference type="Proteomes" id="UP000004994">
    <property type="component" value="Unplaced"/>
</dbReference>
<dbReference type="ExpressionAtlas" id="P37222">
    <property type="expression patterns" value="baseline and differential"/>
</dbReference>
<dbReference type="GO" id="GO:0009507">
    <property type="term" value="C:chloroplast"/>
    <property type="evidence" value="ECO:0000318"/>
    <property type="project" value="GO_Central"/>
</dbReference>
<dbReference type="GO" id="GO:0004473">
    <property type="term" value="F:malate dehydrogenase (decarboxylating) (NADP+) activity"/>
    <property type="evidence" value="ECO:0000318"/>
    <property type="project" value="GO_Central"/>
</dbReference>
<dbReference type="GO" id="GO:0046872">
    <property type="term" value="F:metal ion binding"/>
    <property type="evidence" value="ECO:0007669"/>
    <property type="project" value="UniProtKB-KW"/>
</dbReference>
<dbReference type="GO" id="GO:0051287">
    <property type="term" value="F:NAD binding"/>
    <property type="evidence" value="ECO:0007669"/>
    <property type="project" value="InterPro"/>
</dbReference>
<dbReference type="GO" id="GO:0008948">
    <property type="term" value="F:oxaloacetate decarboxylase activity"/>
    <property type="evidence" value="ECO:0007669"/>
    <property type="project" value="RHEA"/>
</dbReference>
<dbReference type="GO" id="GO:0006108">
    <property type="term" value="P:malate metabolic process"/>
    <property type="evidence" value="ECO:0000318"/>
    <property type="project" value="GO_Central"/>
</dbReference>
<dbReference type="GO" id="GO:0006090">
    <property type="term" value="P:pyruvate metabolic process"/>
    <property type="evidence" value="ECO:0000318"/>
    <property type="project" value="GO_Central"/>
</dbReference>
<dbReference type="CDD" id="cd05312">
    <property type="entry name" value="NAD_bind_1_malic_enz"/>
    <property type="match status" value="1"/>
</dbReference>
<dbReference type="FunFam" id="3.40.50.10380:FF:000002">
    <property type="entry name" value="Malic enzyme"/>
    <property type="match status" value="1"/>
</dbReference>
<dbReference type="FunFam" id="3.40.50.720:FF:000067">
    <property type="entry name" value="Malic enzyme"/>
    <property type="match status" value="1"/>
</dbReference>
<dbReference type="Gene3D" id="3.40.50.10380">
    <property type="entry name" value="Malic enzyme, N-terminal domain"/>
    <property type="match status" value="1"/>
</dbReference>
<dbReference type="Gene3D" id="3.40.50.720">
    <property type="entry name" value="NAD(P)-binding Rossmann-like Domain"/>
    <property type="match status" value="1"/>
</dbReference>
<dbReference type="InterPro" id="IPR046346">
    <property type="entry name" value="Aminoacid_DH-like_N_sf"/>
</dbReference>
<dbReference type="InterPro" id="IPR015884">
    <property type="entry name" value="Malic_enzyme_CS"/>
</dbReference>
<dbReference type="InterPro" id="IPR012301">
    <property type="entry name" value="Malic_N_dom"/>
</dbReference>
<dbReference type="InterPro" id="IPR037062">
    <property type="entry name" value="Malic_N_dom_sf"/>
</dbReference>
<dbReference type="InterPro" id="IPR012302">
    <property type="entry name" value="Malic_NAD-bd"/>
</dbReference>
<dbReference type="InterPro" id="IPR001891">
    <property type="entry name" value="Malic_OxRdtase"/>
</dbReference>
<dbReference type="InterPro" id="IPR036291">
    <property type="entry name" value="NAD(P)-bd_dom_sf"/>
</dbReference>
<dbReference type="NCBIfam" id="NF010052">
    <property type="entry name" value="PRK13529.1"/>
    <property type="match status" value="1"/>
</dbReference>
<dbReference type="PANTHER" id="PTHR23406">
    <property type="entry name" value="MALIC ENZYME-RELATED"/>
    <property type="match status" value="1"/>
</dbReference>
<dbReference type="PANTHER" id="PTHR23406:SF76">
    <property type="entry name" value="NADP-DEPENDENT MALIC ENZYME 4, CHLOROPLASTIC"/>
    <property type="match status" value="1"/>
</dbReference>
<dbReference type="Pfam" id="PF00390">
    <property type="entry name" value="malic"/>
    <property type="match status" value="1"/>
</dbReference>
<dbReference type="Pfam" id="PF03949">
    <property type="entry name" value="Malic_M"/>
    <property type="match status" value="1"/>
</dbReference>
<dbReference type="PIRSF" id="PIRSF000106">
    <property type="entry name" value="ME"/>
    <property type="match status" value="1"/>
</dbReference>
<dbReference type="PRINTS" id="PR00072">
    <property type="entry name" value="MALOXRDTASE"/>
</dbReference>
<dbReference type="SMART" id="SM01274">
    <property type="entry name" value="malic"/>
    <property type="match status" value="1"/>
</dbReference>
<dbReference type="SMART" id="SM00919">
    <property type="entry name" value="Malic_M"/>
    <property type="match status" value="1"/>
</dbReference>
<dbReference type="SUPFAM" id="SSF53223">
    <property type="entry name" value="Aminoacid dehydrogenase-like, N-terminal domain"/>
    <property type="match status" value="1"/>
</dbReference>
<dbReference type="SUPFAM" id="SSF51735">
    <property type="entry name" value="NAD(P)-binding Rossmann-fold domains"/>
    <property type="match status" value="1"/>
</dbReference>
<dbReference type="PROSITE" id="PS00331">
    <property type="entry name" value="MALIC_ENZYMES"/>
    <property type="match status" value="1"/>
</dbReference>
<keyword id="KW-0150">Chloroplast</keyword>
<keyword id="KW-0479">Metal-binding</keyword>
<keyword id="KW-0520">NAD</keyword>
<keyword id="KW-0521">NADP</keyword>
<keyword id="KW-0560">Oxidoreductase</keyword>
<keyword id="KW-0934">Plastid</keyword>
<keyword id="KW-1185">Reference proteome</keyword>
<feature type="chain" id="PRO_0000160199" description="NADP-dependent malic enzyme, chloroplastic">
    <location>
        <begin position="1" status="less than"/>
        <end position="573"/>
    </location>
</feature>
<feature type="active site" description="Proton donor" evidence="1">
    <location>
        <position position="123"/>
    </location>
</feature>
<feature type="active site" description="Proton acceptor" evidence="1">
    <location>
        <position position="194"/>
    </location>
</feature>
<feature type="binding site" evidence="1">
    <location>
        <position position="176"/>
    </location>
    <ligand>
        <name>NAD(+)</name>
        <dbReference type="ChEBI" id="CHEBI:57540"/>
    </ligand>
</feature>
<feature type="binding site" evidence="1">
    <location>
        <position position="265"/>
    </location>
    <ligand>
        <name>a divalent metal cation</name>
        <dbReference type="ChEBI" id="CHEBI:60240"/>
    </ligand>
</feature>
<feature type="binding site" evidence="1">
    <location>
        <position position="266"/>
    </location>
    <ligand>
        <name>a divalent metal cation</name>
        <dbReference type="ChEBI" id="CHEBI:60240"/>
    </ligand>
</feature>
<feature type="binding site" evidence="1">
    <location>
        <position position="289"/>
    </location>
    <ligand>
        <name>a divalent metal cation</name>
        <dbReference type="ChEBI" id="CHEBI:60240"/>
    </ligand>
</feature>
<feature type="binding site" evidence="1">
    <location>
        <position position="289"/>
    </location>
    <ligand>
        <name>NAD(+)</name>
        <dbReference type="ChEBI" id="CHEBI:57540"/>
    </ligand>
</feature>
<feature type="binding site" evidence="1">
    <location>
        <begin position="318"/>
        <end position="334"/>
    </location>
    <ligand>
        <name>NADP(+)</name>
        <dbReference type="ChEBI" id="CHEBI:58349"/>
    </ligand>
</feature>
<feature type="binding site" evidence="1">
    <location>
        <position position="430"/>
    </location>
    <ligand>
        <name>NAD(+)</name>
        <dbReference type="ChEBI" id="CHEBI:57540"/>
    </ligand>
</feature>
<feature type="site" description="Important for activity" evidence="1">
    <location>
        <position position="289"/>
    </location>
</feature>
<feature type="non-terminal residue">
    <location>
        <position position="1"/>
    </location>
</feature>